<gene>
    <name evidence="1" type="primary">hfq</name>
    <name type="ordered locus">BARBAKC583_0624</name>
</gene>
<feature type="chain" id="PRO_1000080652" description="RNA-binding protein Hfq">
    <location>
        <begin position="1"/>
        <end position="79"/>
    </location>
</feature>
<feature type="domain" description="Sm" evidence="2">
    <location>
        <begin position="10"/>
        <end position="70"/>
    </location>
</feature>
<keyword id="KW-0694">RNA-binding</keyword>
<keyword id="KW-0346">Stress response</keyword>
<accession>A1USH6</accession>
<name>HFQ_BARBK</name>
<comment type="function">
    <text evidence="1">RNA chaperone that binds small regulatory RNA (sRNAs) and mRNAs to facilitate mRNA translational regulation in response to envelope stress, environmental stress and changes in metabolite concentrations. Also binds with high specificity to tRNAs.</text>
</comment>
<comment type="subunit">
    <text evidence="1">Homohexamer.</text>
</comment>
<comment type="similarity">
    <text evidence="1">Belongs to the Hfq family.</text>
</comment>
<dbReference type="EMBL" id="CP000524">
    <property type="protein sequence ID" value="ABM44473.1"/>
    <property type="molecule type" value="Genomic_DNA"/>
</dbReference>
<dbReference type="RefSeq" id="WP_005766825.1">
    <property type="nucleotide sequence ID" value="NC_008783.1"/>
</dbReference>
<dbReference type="SMR" id="A1USH6"/>
<dbReference type="STRING" id="360095.BARBAKC583_0624"/>
<dbReference type="GeneID" id="4684582"/>
<dbReference type="KEGG" id="bbk:BARBAKC583_0624"/>
<dbReference type="PATRIC" id="fig|360095.6.peg.607"/>
<dbReference type="eggNOG" id="COG1923">
    <property type="taxonomic scope" value="Bacteria"/>
</dbReference>
<dbReference type="HOGENOM" id="CLU_113688_0_2_5"/>
<dbReference type="OrthoDB" id="9799751at2"/>
<dbReference type="Proteomes" id="UP000000643">
    <property type="component" value="Chromosome"/>
</dbReference>
<dbReference type="GO" id="GO:0005829">
    <property type="term" value="C:cytosol"/>
    <property type="evidence" value="ECO:0007669"/>
    <property type="project" value="TreeGrafter"/>
</dbReference>
<dbReference type="GO" id="GO:0003723">
    <property type="term" value="F:RNA binding"/>
    <property type="evidence" value="ECO:0007669"/>
    <property type="project" value="UniProtKB-UniRule"/>
</dbReference>
<dbReference type="GO" id="GO:0006355">
    <property type="term" value="P:regulation of DNA-templated transcription"/>
    <property type="evidence" value="ECO:0007669"/>
    <property type="project" value="InterPro"/>
</dbReference>
<dbReference type="GO" id="GO:0043487">
    <property type="term" value="P:regulation of RNA stability"/>
    <property type="evidence" value="ECO:0007669"/>
    <property type="project" value="TreeGrafter"/>
</dbReference>
<dbReference type="GO" id="GO:0045974">
    <property type="term" value="P:regulation of translation, ncRNA-mediated"/>
    <property type="evidence" value="ECO:0007669"/>
    <property type="project" value="TreeGrafter"/>
</dbReference>
<dbReference type="CDD" id="cd01716">
    <property type="entry name" value="Hfq"/>
    <property type="match status" value="1"/>
</dbReference>
<dbReference type="Gene3D" id="2.30.30.100">
    <property type="match status" value="1"/>
</dbReference>
<dbReference type="HAMAP" id="MF_00436">
    <property type="entry name" value="Hfq"/>
    <property type="match status" value="1"/>
</dbReference>
<dbReference type="InterPro" id="IPR005001">
    <property type="entry name" value="Hfq"/>
</dbReference>
<dbReference type="InterPro" id="IPR010920">
    <property type="entry name" value="LSM_dom_sf"/>
</dbReference>
<dbReference type="InterPro" id="IPR047575">
    <property type="entry name" value="Sm"/>
</dbReference>
<dbReference type="NCBIfam" id="TIGR02383">
    <property type="entry name" value="Hfq"/>
    <property type="match status" value="1"/>
</dbReference>
<dbReference type="NCBIfam" id="NF001602">
    <property type="entry name" value="PRK00395.1"/>
    <property type="match status" value="1"/>
</dbReference>
<dbReference type="PANTHER" id="PTHR34772">
    <property type="entry name" value="RNA-BINDING PROTEIN HFQ"/>
    <property type="match status" value="1"/>
</dbReference>
<dbReference type="PANTHER" id="PTHR34772:SF1">
    <property type="entry name" value="RNA-BINDING PROTEIN HFQ"/>
    <property type="match status" value="1"/>
</dbReference>
<dbReference type="Pfam" id="PF17209">
    <property type="entry name" value="Hfq"/>
    <property type="match status" value="1"/>
</dbReference>
<dbReference type="SUPFAM" id="SSF50182">
    <property type="entry name" value="Sm-like ribonucleoproteins"/>
    <property type="match status" value="1"/>
</dbReference>
<dbReference type="PROSITE" id="PS52002">
    <property type="entry name" value="SM"/>
    <property type="match status" value="1"/>
</dbReference>
<protein>
    <recommendedName>
        <fullName evidence="1">RNA-binding protein Hfq</fullName>
    </recommendedName>
</protein>
<sequence length="79" mass="8960">MVERSQHLQDVFLKTVRKQEISLTIFLVNGVKLTGIVTSFDNFCILLRRDGHAQLVYKHAISTIMPGQPIKIFEGEGCE</sequence>
<organism>
    <name type="scientific">Bartonella bacilliformis (strain ATCC 35685 / KC583 / Herrer 020/F12,63)</name>
    <dbReference type="NCBI Taxonomy" id="360095"/>
    <lineage>
        <taxon>Bacteria</taxon>
        <taxon>Pseudomonadati</taxon>
        <taxon>Pseudomonadota</taxon>
        <taxon>Alphaproteobacteria</taxon>
        <taxon>Hyphomicrobiales</taxon>
        <taxon>Bartonellaceae</taxon>
        <taxon>Bartonella</taxon>
    </lineage>
</organism>
<proteinExistence type="inferred from homology"/>
<reference key="1">
    <citation type="submission" date="2006-12" db="EMBL/GenBank/DDBJ databases">
        <authorList>
            <person name="Hendrix L."/>
            <person name="Mohamoud Y."/>
            <person name="Radune D."/>
            <person name="Shvartsbeyn A."/>
            <person name="Daugherty S."/>
            <person name="Dodson R."/>
            <person name="Durkin A.S."/>
            <person name="Harkins D."/>
            <person name="Huot H."/>
            <person name="Kothari S.P."/>
            <person name="Madupu R."/>
            <person name="Li J."/>
            <person name="Nelson W.C."/>
            <person name="Shrivastava S."/>
            <person name="Giglio M.G."/>
            <person name="Haft D."/>
            <person name="Selengut J."/>
            <person name="Fraser-Ligget C."/>
            <person name="Seshadri R."/>
        </authorList>
    </citation>
    <scope>NUCLEOTIDE SEQUENCE [LARGE SCALE GENOMIC DNA]</scope>
    <source>
        <strain>ATCC 35685 / KC583 / Herrer 020/F12,63</strain>
    </source>
</reference>
<evidence type="ECO:0000255" key="1">
    <source>
        <dbReference type="HAMAP-Rule" id="MF_00436"/>
    </source>
</evidence>
<evidence type="ECO:0000255" key="2">
    <source>
        <dbReference type="PROSITE-ProRule" id="PRU01346"/>
    </source>
</evidence>